<keyword id="KW-0002">3D-structure</keyword>
<keyword id="KW-0031">Aminopeptidase</keyword>
<keyword id="KW-0378">Hydrolase</keyword>
<keyword id="KW-0479">Metal-binding</keyword>
<keyword id="KW-0645">Protease</keyword>
<keyword id="KW-1185">Reference proteome</keyword>
<evidence type="ECO:0000255" key="1">
    <source>
        <dbReference type="HAMAP-Rule" id="MF_01974"/>
    </source>
</evidence>
<evidence type="ECO:0000269" key="2">
    <source>
    </source>
</evidence>
<evidence type="ECO:0000269" key="3">
    <source>
    </source>
</evidence>
<evidence type="ECO:0000269" key="4">
    <source>
    </source>
</evidence>
<evidence type="ECO:0000269" key="5">
    <source>
    </source>
</evidence>
<evidence type="ECO:0000305" key="6">
    <source>
    </source>
</evidence>
<evidence type="ECO:0007829" key="7">
    <source>
        <dbReference type="PDB" id="3IU7"/>
    </source>
</evidence>
<evidence type="ECO:0007829" key="8">
    <source>
        <dbReference type="PDB" id="3PKA"/>
    </source>
</evidence>
<evidence type="ECO:0007829" key="9">
    <source>
        <dbReference type="PDB" id="3PKB"/>
    </source>
</evidence>
<protein>
    <recommendedName>
        <fullName evidence="1">Methionine aminopeptidase 2</fullName>
        <shortName evidence="1">MAP 2</shortName>
        <shortName evidence="1">MetAP 2</shortName>
        <ecNumber evidence="1">3.4.11.18</ecNumber>
    </recommendedName>
    <alternativeName>
        <fullName evidence="1">Peptidase M</fullName>
    </alternativeName>
</protein>
<gene>
    <name evidence="1" type="primary">map</name>
    <name type="synonym">mapB</name>
    <name type="ordered locus">Rv2861c</name>
    <name type="ORF">MTV003.07c</name>
</gene>
<organism>
    <name type="scientific">Mycobacterium tuberculosis (strain ATCC 25618 / H37Rv)</name>
    <dbReference type="NCBI Taxonomy" id="83332"/>
    <lineage>
        <taxon>Bacteria</taxon>
        <taxon>Bacillati</taxon>
        <taxon>Actinomycetota</taxon>
        <taxon>Actinomycetes</taxon>
        <taxon>Mycobacteriales</taxon>
        <taxon>Mycobacteriaceae</taxon>
        <taxon>Mycobacterium</taxon>
        <taxon>Mycobacterium tuberculosis complex</taxon>
    </lineage>
</organism>
<accession>P9WK19</accession>
<accession>L0TDS5</accession>
<accession>O33343</accession>
<accession>P0A5J2</accession>
<comment type="function">
    <text evidence="1 3 4">Removes the N-terminal methionine from nascent proteins. The N-terminal methionine is often cleaved when the second residue in the primary sequence is small and uncharged (Met-Ala-, Cys, Gly, Pro, Ser, Thr, or Val). Requires deformylation of the N(alpha)-formylated initiator methionine before it can be hydrolyzed.</text>
</comment>
<comment type="catalytic activity">
    <reaction evidence="1">
        <text>Release of N-terminal amino acids, preferentially methionine, from peptides and arylamides.</text>
        <dbReference type="EC" id="3.4.11.18"/>
    </reaction>
</comment>
<comment type="cofactor">
    <cofactor evidence="1 2 4">
        <name>Co(2+)</name>
        <dbReference type="ChEBI" id="CHEBI:48828"/>
    </cofactor>
    <cofactor evidence="1">
        <name>Zn(2+)</name>
        <dbReference type="ChEBI" id="CHEBI:29105"/>
    </cofactor>
    <cofactor evidence="1 4 5">
        <name>Mn(2+)</name>
        <dbReference type="ChEBI" id="CHEBI:29035"/>
    </cofactor>
    <cofactor evidence="1 4">
        <name>Fe(2+)</name>
        <dbReference type="ChEBI" id="CHEBI:29033"/>
    </cofactor>
    <text evidence="1 6">Binds 2 divalent metal cations per subunit. Has a high-affinity and a low affinity metal-binding site. The true nature of the physiological cofactor is under debate. The enzyme is active with cobalt, zinc, manganese or divalent iron ions. Most likely, methionine aminopeptidases function as mononuclear Fe(2+)-metalloproteases under physiological conditions, and the catalytically relevant metal-binding site has been assigned to the histidine-containing high-affinity site.</text>
</comment>
<comment type="activity regulation">
    <text evidence="4 5">Inhibited by bengamide derivatives and by various metalloform-selective inhibitors.</text>
</comment>
<comment type="biophysicochemical properties">
    <kinetics>
        <KM evidence="3 4">58 uM for Met-Gly-Met-Met (at pH 7.5 and at 37 degrees Celsius)</KM>
        <KM evidence="3 4">394 uM for Met-Ala-Ser (at pH 7.5 and at 37 degrees Celsius)</KM>
    </kinetics>
    <temperatureDependence>
        <text evidence="3 4">Optimum temperature is 37 degrees Celsius. It lost all its activities at 55 degrees Celsius.</text>
    </temperatureDependence>
</comment>
<comment type="subunit">
    <text evidence="1">Monomer.</text>
</comment>
<comment type="mass spectrometry" mass="32516.0" method="MALDI" evidence="3"/>
<comment type="similarity">
    <text evidence="1">Belongs to the peptidase M24A family. Methionine aminopeptidase type 1 subfamily.</text>
</comment>
<dbReference type="EC" id="3.4.11.18" evidence="1"/>
<dbReference type="EMBL" id="AL123456">
    <property type="protein sequence ID" value="CCP45662.1"/>
    <property type="molecule type" value="Genomic_DNA"/>
</dbReference>
<dbReference type="PIR" id="G70885">
    <property type="entry name" value="G70885"/>
</dbReference>
<dbReference type="RefSeq" id="WP_003899513.1">
    <property type="nucleotide sequence ID" value="NZ_NVQJ01000006.1"/>
</dbReference>
<dbReference type="RefSeq" id="YP_177911.1">
    <property type="nucleotide sequence ID" value="NC_000962.3"/>
</dbReference>
<dbReference type="PDB" id="1Y1N">
    <property type="method" value="X-ray"/>
    <property type="resolution" value="1.51 A"/>
    <property type="chains" value="A=1-285"/>
</dbReference>
<dbReference type="PDB" id="1YJ3">
    <property type="method" value="X-ray"/>
    <property type="resolution" value="1.60 A"/>
    <property type="chains" value="A=1-285"/>
</dbReference>
<dbReference type="PDB" id="3IU7">
    <property type="method" value="X-ray"/>
    <property type="resolution" value="1.40 A"/>
    <property type="chains" value="A=1-285"/>
</dbReference>
<dbReference type="PDB" id="3IU8">
    <property type="method" value="X-ray"/>
    <property type="resolution" value="1.85 A"/>
    <property type="chains" value="A=1-285"/>
</dbReference>
<dbReference type="PDB" id="3IU9">
    <property type="method" value="X-ray"/>
    <property type="resolution" value="1.75 A"/>
    <property type="chains" value="A=1-285"/>
</dbReference>
<dbReference type="PDB" id="3PKA">
    <property type="method" value="X-ray"/>
    <property type="resolution" value="1.25 A"/>
    <property type="chains" value="A=1-285"/>
</dbReference>
<dbReference type="PDB" id="3PKB">
    <property type="method" value="X-ray"/>
    <property type="resolution" value="1.25 A"/>
    <property type="chains" value="A=1-285"/>
</dbReference>
<dbReference type="PDB" id="3PKC">
    <property type="method" value="X-ray"/>
    <property type="resolution" value="1.47 A"/>
    <property type="chains" value="A=1-285"/>
</dbReference>
<dbReference type="PDB" id="3PKD">
    <property type="method" value="X-ray"/>
    <property type="resolution" value="1.47 A"/>
    <property type="chains" value="A=1-285"/>
</dbReference>
<dbReference type="PDB" id="3PKE">
    <property type="method" value="X-ray"/>
    <property type="resolution" value="1.60 A"/>
    <property type="chains" value="A=1-285"/>
</dbReference>
<dbReference type="PDB" id="3ROR">
    <property type="method" value="X-ray"/>
    <property type="resolution" value="2.00 A"/>
    <property type="chains" value="A=1-285"/>
</dbReference>
<dbReference type="PDB" id="4IDY">
    <property type="method" value="X-ray"/>
    <property type="resolution" value="2.00 A"/>
    <property type="chains" value="A=1-285"/>
</dbReference>
<dbReference type="PDB" id="4IEC">
    <property type="method" value="X-ray"/>
    <property type="resolution" value="2.00 A"/>
    <property type="chains" value="A=1-285"/>
</dbReference>
<dbReference type="PDB" id="4IF7">
    <property type="method" value="X-ray"/>
    <property type="resolution" value="2.00 A"/>
    <property type="chains" value="A=1-285"/>
</dbReference>
<dbReference type="PDB" id="4OOK">
    <property type="method" value="X-ray"/>
    <property type="resolution" value="1.90 A"/>
    <property type="chains" value="A=1-283"/>
</dbReference>
<dbReference type="PDBsum" id="1Y1N"/>
<dbReference type="PDBsum" id="1YJ3"/>
<dbReference type="PDBsum" id="3IU7"/>
<dbReference type="PDBsum" id="3IU8"/>
<dbReference type="PDBsum" id="3IU9"/>
<dbReference type="PDBsum" id="3PKA"/>
<dbReference type="PDBsum" id="3PKB"/>
<dbReference type="PDBsum" id="3PKC"/>
<dbReference type="PDBsum" id="3PKD"/>
<dbReference type="PDBsum" id="3PKE"/>
<dbReference type="PDBsum" id="3ROR"/>
<dbReference type="PDBsum" id="4IDY"/>
<dbReference type="PDBsum" id="4IEC"/>
<dbReference type="PDBsum" id="4IF7"/>
<dbReference type="PDBsum" id="4OOK"/>
<dbReference type="SMR" id="P9WK19"/>
<dbReference type="FunCoup" id="P9WK19">
    <property type="interactions" value="392"/>
</dbReference>
<dbReference type="STRING" id="83332.Rv2861c"/>
<dbReference type="DrugBank" id="DB02909">
    <property type="generic name" value="5-(2-Chlorophenyl)Furan-2-Carboxylic Acid"/>
</dbReference>
<dbReference type="MEROPS" id="M24.A06"/>
<dbReference type="PaxDb" id="83332-Rv2861c"/>
<dbReference type="DNASU" id="888596"/>
<dbReference type="GeneID" id="45426848"/>
<dbReference type="GeneID" id="888596"/>
<dbReference type="KEGG" id="mtu:Rv2861c"/>
<dbReference type="KEGG" id="mtv:RVBD_2861c"/>
<dbReference type="TubercuList" id="Rv2861c"/>
<dbReference type="eggNOG" id="COG0024">
    <property type="taxonomic scope" value="Bacteria"/>
</dbReference>
<dbReference type="InParanoid" id="P9WK19"/>
<dbReference type="OrthoDB" id="9802055at2"/>
<dbReference type="PhylomeDB" id="P9WK19"/>
<dbReference type="BRENDA" id="3.4.11.18">
    <property type="organism ID" value="3445"/>
</dbReference>
<dbReference type="SABIO-RK" id="P9WK19"/>
<dbReference type="EvolutionaryTrace" id="P9WK19"/>
<dbReference type="PRO" id="PR:P9WK19"/>
<dbReference type="Proteomes" id="UP000001584">
    <property type="component" value="Chromosome"/>
</dbReference>
<dbReference type="GO" id="GO:0005829">
    <property type="term" value="C:cytosol"/>
    <property type="evidence" value="ECO:0000318"/>
    <property type="project" value="GO_Central"/>
</dbReference>
<dbReference type="GO" id="GO:0050897">
    <property type="term" value="F:cobalt ion binding"/>
    <property type="evidence" value="ECO:0000314"/>
    <property type="project" value="MTBBASE"/>
</dbReference>
<dbReference type="GO" id="GO:0004239">
    <property type="term" value="F:initiator methionyl aminopeptidase activity"/>
    <property type="evidence" value="ECO:0000314"/>
    <property type="project" value="UniProtKB"/>
</dbReference>
<dbReference type="GO" id="GO:0005506">
    <property type="term" value="F:iron ion binding"/>
    <property type="evidence" value="ECO:0000314"/>
    <property type="project" value="MTBBASE"/>
</dbReference>
<dbReference type="GO" id="GO:0070006">
    <property type="term" value="F:metalloaminopeptidase activity"/>
    <property type="evidence" value="ECO:0000314"/>
    <property type="project" value="MTBBASE"/>
</dbReference>
<dbReference type="GO" id="GO:0016485">
    <property type="term" value="P:protein processing"/>
    <property type="evidence" value="ECO:0000314"/>
    <property type="project" value="UniProtKB"/>
</dbReference>
<dbReference type="CDD" id="cd01086">
    <property type="entry name" value="MetAP1"/>
    <property type="match status" value="1"/>
</dbReference>
<dbReference type="FunFam" id="3.90.230.10:FF:000001">
    <property type="entry name" value="Methionine aminopeptidase"/>
    <property type="match status" value="1"/>
</dbReference>
<dbReference type="Gene3D" id="3.90.230.10">
    <property type="entry name" value="Creatinase/methionine aminopeptidase superfamily"/>
    <property type="match status" value="1"/>
</dbReference>
<dbReference type="HAMAP" id="MF_01974">
    <property type="entry name" value="MetAP_1"/>
    <property type="match status" value="1"/>
</dbReference>
<dbReference type="InterPro" id="IPR036005">
    <property type="entry name" value="Creatinase/aminopeptidase-like"/>
</dbReference>
<dbReference type="InterPro" id="IPR000994">
    <property type="entry name" value="Pept_M24"/>
</dbReference>
<dbReference type="InterPro" id="IPR001714">
    <property type="entry name" value="Pept_M24_MAP"/>
</dbReference>
<dbReference type="InterPro" id="IPR002467">
    <property type="entry name" value="Pept_M24A_MAP1"/>
</dbReference>
<dbReference type="NCBIfam" id="TIGR00500">
    <property type="entry name" value="met_pdase_I"/>
    <property type="match status" value="1"/>
</dbReference>
<dbReference type="PANTHER" id="PTHR43330">
    <property type="entry name" value="METHIONINE AMINOPEPTIDASE"/>
    <property type="match status" value="1"/>
</dbReference>
<dbReference type="PANTHER" id="PTHR43330:SF16">
    <property type="entry name" value="METHIONINE AMINOPEPTIDASE 2"/>
    <property type="match status" value="1"/>
</dbReference>
<dbReference type="Pfam" id="PF00557">
    <property type="entry name" value="Peptidase_M24"/>
    <property type="match status" value="1"/>
</dbReference>
<dbReference type="PRINTS" id="PR00599">
    <property type="entry name" value="MAPEPTIDASE"/>
</dbReference>
<dbReference type="SUPFAM" id="SSF55920">
    <property type="entry name" value="Creatinase/aminopeptidase"/>
    <property type="match status" value="1"/>
</dbReference>
<dbReference type="PROSITE" id="PS00680">
    <property type="entry name" value="MAP_1"/>
    <property type="match status" value="1"/>
</dbReference>
<sequence length="285" mass="30891">MPSRTALSPGVLSPTRPVPNWIARPEYVGKPAAQEGSEPWVQTPEVIEKMRVAGRIAAGALAEAGKAVAPGVTTDELDRIAHEYLVDNGAYPSTLGYKGFPKSCCTSLNEVICHGIPDSTVITDGDIVNIDVTAYIGGVHGDTNATFPAGDVADEHRLLVDRTREATMRAINTVKPGRALSVIGRVIESYANRFGYNVVRDFTGHGIGTTFHNGLVVLHYDQPAVETIMQPGMTFTIEPMINLGALDYEIWDDGWTVVTKDRKWTAQFEHTLLVTDTGVEILTCL</sequence>
<name>MAP12_MYCTU</name>
<reference key="1">
    <citation type="journal article" date="1998" name="Nature">
        <title>Deciphering the biology of Mycobacterium tuberculosis from the complete genome sequence.</title>
        <authorList>
            <person name="Cole S.T."/>
            <person name="Brosch R."/>
            <person name="Parkhill J."/>
            <person name="Garnier T."/>
            <person name="Churcher C.M."/>
            <person name="Harris D.E."/>
            <person name="Gordon S.V."/>
            <person name="Eiglmeier K."/>
            <person name="Gas S."/>
            <person name="Barry C.E. III"/>
            <person name="Tekaia F."/>
            <person name="Badcock K."/>
            <person name="Basham D."/>
            <person name="Brown D."/>
            <person name="Chillingworth T."/>
            <person name="Connor R."/>
            <person name="Davies R.M."/>
            <person name="Devlin K."/>
            <person name="Feltwell T."/>
            <person name="Gentles S."/>
            <person name="Hamlin N."/>
            <person name="Holroyd S."/>
            <person name="Hornsby T."/>
            <person name="Jagels K."/>
            <person name="Krogh A."/>
            <person name="McLean J."/>
            <person name="Moule S."/>
            <person name="Murphy L.D."/>
            <person name="Oliver S."/>
            <person name="Osborne J."/>
            <person name="Quail M.A."/>
            <person name="Rajandream M.A."/>
            <person name="Rogers J."/>
            <person name="Rutter S."/>
            <person name="Seeger K."/>
            <person name="Skelton S."/>
            <person name="Squares S."/>
            <person name="Squares R."/>
            <person name="Sulston J.E."/>
            <person name="Taylor K."/>
            <person name="Whitehead S."/>
            <person name="Barrell B.G."/>
        </authorList>
    </citation>
    <scope>NUCLEOTIDE SEQUENCE [LARGE SCALE GENOMIC DNA]</scope>
    <source>
        <strain>ATCC 25618 / H37Rv</strain>
    </source>
</reference>
<reference key="2">
    <citation type="journal article" date="2009" name="Curr. Microbiol.">
        <title>Expression and characterization of two functional methionine aminopeptidases from Mycobacterium tuberculosis H37Rv.</title>
        <authorList>
            <person name="Zhang X."/>
            <person name="Chen S."/>
            <person name="Hu Z."/>
            <person name="Zhang L."/>
            <person name="Wang H."/>
        </authorList>
    </citation>
    <scope>FUNCTION AS A METHIONINE AMINOPEPTIDASE</scope>
    <scope>SUBSTRATE SPECIFICITY</scope>
    <scope>BIOPHYSICOCHEMICAL PROPERTIES</scope>
    <scope>COFACTOR</scope>
    <scope>MASS SPECTROMETRY</scope>
</reference>
<reference key="3">
    <citation type="journal article" date="2011" name="Mol. Cell. Proteomics">
        <title>Proteogenomic analysis of Mycobacterium tuberculosis by high resolution mass spectrometry.</title>
        <authorList>
            <person name="Kelkar D.S."/>
            <person name="Kumar D."/>
            <person name="Kumar P."/>
            <person name="Balakrishnan L."/>
            <person name="Muthusamy B."/>
            <person name="Yadav A.K."/>
            <person name="Shrivastava P."/>
            <person name="Marimuthu A."/>
            <person name="Anand S."/>
            <person name="Sundaram H."/>
            <person name="Kingsbury R."/>
            <person name="Harsha H.C."/>
            <person name="Nair B."/>
            <person name="Prasad T.S."/>
            <person name="Chauhan D.S."/>
            <person name="Katoch K."/>
            <person name="Katoch V.M."/>
            <person name="Kumar P."/>
            <person name="Chaerkady R."/>
            <person name="Ramachandran S."/>
            <person name="Dash D."/>
            <person name="Pandey A."/>
        </authorList>
    </citation>
    <scope>IDENTIFICATION BY MASS SPECTROMETRY [LARGE SCALE ANALYSIS]</scope>
    <source>
        <strain>ATCC 25618 / H37Rv</strain>
    </source>
</reference>
<reference key="4">
    <citation type="journal article" date="2005" name="Biochemistry">
        <title>Identification of an SH3-binding motif in a new class of methionine aminopeptidases from Mycobacterium tuberculosis suggests a mode of interaction with the ribosome.</title>
        <authorList>
            <person name="Addlagatta A."/>
            <person name="Quillin M.L."/>
            <person name="Omotoso O."/>
            <person name="Liu J.O."/>
            <person name="Matthews B.W."/>
        </authorList>
    </citation>
    <scope>X-RAY CRYSTALLOGRAPHY (1.51 ANGSTROMS) IN COMPLEXES WITH COBALT IONS AND METHIONINE</scope>
</reference>
<reference key="5">
    <citation type="journal article" date="2010" name="J. Med. Chem.">
        <title>Catalysis and inhibition of Mycobacterium tuberculosis methionine aminopeptidase.</title>
        <authorList>
            <person name="Lu J.P."/>
            <person name="Chai S.C."/>
            <person name="Ye Q.Z."/>
        </authorList>
    </citation>
    <scope>X-RAY CRYSTALLOGRAPHY (1.4 ANGSTROMS) IN COMPLEX WITH SUBSTRATE ANALOGS AND DIVALENT CATIONS</scope>
    <scope>FUNCTION AS A METHIONINE AMINOPEPTIDASE</scope>
    <scope>BIOPHYSICOCHEMICAL PROPERTIES</scope>
    <scope>ACTIVITY REGULATION</scope>
    <scope>COFACTOR</scope>
</reference>
<reference key="6">
    <citation type="journal article" date="2011" name="ChemMedChem">
        <title>Inhibition of Mycobacterium tuberculosis methionine aminopeptidases by bengamide derivatives.</title>
        <authorList>
            <person name="Lu J.P."/>
            <person name="Yuan X.H."/>
            <person name="Yuan H."/>
            <person name="Wang W.L."/>
            <person name="Wan B."/>
            <person name="Franzblau S.G."/>
            <person name="Ye Q.Z."/>
        </authorList>
    </citation>
    <scope>X-RAY CRYSTALLOGRAPHY (1.25 ANGSTROMS) IN COMPLEX WITH SUBSTRATE ANALOGS AND MANGANESE IONS</scope>
    <scope>COFACTOR</scope>
    <scope>ACTIVITY REGULATION</scope>
</reference>
<proteinExistence type="evidence at protein level"/>
<feature type="chain" id="PRO_0000148948" description="Methionine aminopeptidase 2">
    <location>
        <begin position="1"/>
        <end position="285"/>
    </location>
</feature>
<feature type="binding site" evidence="1 2 4 5">
    <location>
        <position position="114"/>
    </location>
    <ligand>
        <name>substrate</name>
    </ligand>
</feature>
<feature type="binding site" evidence="1 2 4 5">
    <location>
        <position position="131"/>
    </location>
    <ligand>
        <name>a divalent metal cation</name>
        <dbReference type="ChEBI" id="CHEBI:60240"/>
        <label>1</label>
    </ligand>
</feature>
<feature type="binding site" evidence="1 2 4 5">
    <location>
        <position position="142"/>
    </location>
    <ligand>
        <name>a divalent metal cation</name>
        <dbReference type="ChEBI" id="CHEBI:60240"/>
        <label>1</label>
    </ligand>
</feature>
<feature type="binding site" evidence="1 2 4 5">
    <location>
        <position position="142"/>
    </location>
    <ligand>
        <name>a divalent metal cation</name>
        <dbReference type="ChEBI" id="CHEBI:60240"/>
        <label>2</label>
        <note>catalytic</note>
    </ligand>
</feature>
<feature type="binding site" evidence="1 2 4 5">
    <location>
        <position position="205"/>
    </location>
    <ligand>
        <name>a divalent metal cation</name>
        <dbReference type="ChEBI" id="CHEBI:60240"/>
        <label>2</label>
        <note>catalytic</note>
    </ligand>
</feature>
<feature type="binding site" evidence="1 2 4 5">
    <location>
        <position position="212"/>
    </location>
    <ligand>
        <name>substrate</name>
    </ligand>
</feature>
<feature type="binding site" evidence="1 2 4 5">
    <location>
        <position position="238"/>
    </location>
    <ligand>
        <name>a divalent metal cation</name>
        <dbReference type="ChEBI" id="CHEBI:60240"/>
        <label>2</label>
        <note>catalytic</note>
    </ligand>
</feature>
<feature type="binding site" evidence="1 2 4 5">
    <location>
        <position position="269"/>
    </location>
    <ligand>
        <name>a divalent metal cation</name>
        <dbReference type="ChEBI" id="CHEBI:60240"/>
        <label>1</label>
    </ligand>
</feature>
<feature type="binding site" evidence="1 2 4 5">
    <location>
        <position position="269"/>
    </location>
    <ligand>
        <name>a divalent metal cation</name>
        <dbReference type="ChEBI" id="CHEBI:60240"/>
        <label>2</label>
        <note>catalytic</note>
    </ligand>
</feature>
<feature type="turn" evidence="8">
    <location>
        <begin position="26"/>
        <end position="29"/>
    </location>
</feature>
<feature type="strand" evidence="8">
    <location>
        <begin position="30"/>
        <end position="32"/>
    </location>
</feature>
<feature type="strand" evidence="7">
    <location>
        <begin position="36"/>
        <end position="38"/>
    </location>
</feature>
<feature type="helix" evidence="8">
    <location>
        <begin position="44"/>
        <end position="66"/>
    </location>
</feature>
<feature type="helix" evidence="8">
    <location>
        <begin position="74"/>
        <end position="87"/>
    </location>
</feature>
<feature type="turn" evidence="8">
    <location>
        <begin position="93"/>
        <end position="96"/>
    </location>
</feature>
<feature type="helix" evidence="8">
    <location>
        <begin position="97"/>
        <end position="99"/>
    </location>
</feature>
<feature type="strand" evidence="8">
    <location>
        <begin position="102"/>
        <end position="108"/>
    </location>
</feature>
<feature type="strand" evidence="8">
    <location>
        <begin position="111"/>
        <end position="113"/>
    </location>
</feature>
<feature type="strand" evidence="8">
    <location>
        <begin position="127"/>
        <end position="136"/>
    </location>
</feature>
<feature type="strand" evidence="8">
    <location>
        <begin position="139"/>
        <end position="148"/>
    </location>
</feature>
<feature type="helix" evidence="8">
    <location>
        <begin position="154"/>
        <end position="172"/>
    </location>
</feature>
<feature type="helix" evidence="8">
    <location>
        <begin position="182"/>
        <end position="192"/>
    </location>
</feature>
<feature type="turn" evidence="8">
    <location>
        <begin position="193"/>
        <end position="195"/>
    </location>
</feature>
<feature type="strand" evidence="9">
    <location>
        <begin position="200"/>
        <end position="202"/>
    </location>
</feature>
<feature type="strand" evidence="8">
    <location>
        <begin position="204"/>
        <end position="206"/>
    </location>
</feature>
<feature type="strand" evidence="8">
    <location>
        <begin position="208"/>
        <end position="212"/>
    </location>
</feature>
<feature type="strand" evidence="8">
    <location>
        <begin position="233"/>
        <end position="237"/>
    </location>
</feature>
<feature type="strand" evidence="8">
    <location>
        <begin position="240"/>
        <end position="244"/>
    </location>
</feature>
<feature type="strand" evidence="8">
    <location>
        <begin position="248"/>
        <end position="250"/>
    </location>
</feature>
<feature type="strand" evidence="8">
    <location>
        <begin position="257"/>
        <end position="259"/>
    </location>
</feature>
<feature type="strand" evidence="8">
    <location>
        <begin position="265"/>
        <end position="267"/>
    </location>
</feature>
<feature type="strand" evidence="8">
    <location>
        <begin position="269"/>
        <end position="274"/>
    </location>
</feature>
<feature type="strand" evidence="8">
    <location>
        <begin position="276"/>
        <end position="283"/>
    </location>
</feature>